<proteinExistence type="inferred from homology"/>
<feature type="chain" id="PRO_0000163789" description="Ribonuclease Y">
    <location>
        <begin position="1"/>
        <end position="519"/>
    </location>
</feature>
<feature type="transmembrane region" description="Helical" evidence="1">
    <location>
        <begin position="3"/>
        <end position="23"/>
    </location>
</feature>
<feature type="domain" description="KH" evidence="1">
    <location>
        <begin position="209"/>
        <end position="269"/>
    </location>
</feature>
<feature type="domain" description="HD" evidence="2">
    <location>
        <begin position="335"/>
        <end position="428"/>
    </location>
</feature>
<keyword id="KW-1003">Cell membrane</keyword>
<keyword id="KW-0255">Endonuclease</keyword>
<keyword id="KW-0378">Hydrolase</keyword>
<keyword id="KW-0472">Membrane</keyword>
<keyword id="KW-0540">Nuclease</keyword>
<keyword id="KW-0694">RNA-binding</keyword>
<keyword id="KW-0812">Transmembrane</keyword>
<keyword id="KW-1133">Transmembrane helix</keyword>
<keyword id="KW-0843">Virulence</keyword>
<sequence length="519" mass="58512">MNLLSLLLILLGIILGVVGGYVVARNLLLQKQSQARQTAEDIVNQAHKEADNIKKEKLLEAKEENQILREQTEAELRERRSELQRQETRLLQKEENLERKSDLLDKKDEILEQKESKIEEKQQQVDAKESSVQTLIMKHEQELERISGLTQEEAINEQLQRVEEELSQDIAVLVKEKEKEAKEKVDKTAKELLATAVQRLAADHTSESTVSVVNLPNDEMKGRIIGREGRNIRTLETLTGIDLIIDDTPEAVILSGFDPIRREIARTALVNLVSDGRIHPGRIEDMVEKARKEVDDIIREAGEQATFEVNAHNMHPDLVKIVGRLNYRTSYGQNVLKHSIEVAHLASMLAAELGEDETLAKRAGLLHDVGKAIDHEVEGSHVEIGVELAKKYGENETVINAIHSHHGDVEPTSIISILVAAADALSAARPGARKETLENYIRRLERLETLSESYDGVEKAFAIQAGREIRVIVSPEEIDDLKSYRLARDIKNQIEDELQYPGHIKVTVVRETRAVEYAK</sequence>
<protein>
    <recommendedName>
        <fullName evidence="1">Ribonuclease Y</fullName>
        <shortName evidence="1">RNase Y</shortName>
        <ecNumber evidence="1">3.1.-.-</ecNumber>
    </recommendedName>
    <alternativeName>
        <fullName>Conserved virulence factor A</fullName>
    </alternativeName>
</protein>
<gene>
    <name evidence="1" type="primary">rny</name>
    <name type="synonym">cvfA</name>
    <name type="ordered locus">SAR1262</name>
</gene>
<comment type="function">
    <text evidence="1">Endoribonuclease that initiates mRNA decay.</text>
</comment>
<comment type="subcellular location">
    <subcellularLocation>
        <location evidence="1">Cell membrane</location>
        <topology evidence="1">Single-pass membrane protein</topology>
    </subcellularLocation>
</comment>
<comment type="similarity">
    <text evidence="1">Belongs to the RNase Y family.</text>
</comment>
<name>RNY_STAAR</name>
<accession>Q6GHE9</accession>
<dbReference type="EC" id="3.1.-.-" evidence="1"/>
<dbReference type="EMBL" id="BX571856">
    <property type="protein sequence ID" value="CAG40264.1"/>
    <property type="molecule type" value="Genomic_DNA"/>
</dbReference>
<dbReference type="RefSeq" id="WP_001050913.1">
    <property type="nucleotide sequence ID" value="NC_002952.2"/>
</dbReference>
<dbReference type="SMR" id="Q6GHE9"/>
<dbReference type="IntAct" id="Q6GHE9">
    <property type="interactions" value="2"/>
</dbReference>
<dbReference type="KEGG" id="sar:SAR1262"/>
<dbReference type="HOGENOM" id="CLU_028328_1_0_9"/>
<dbReference type="Proteomes" id="UP000000596">
    <property type="component" value="Chromosome"/>
</dbReference>
<dbReference type="GO" id="GO:0005886">
    <property type="term" value="C:plasma membrane"/>
    <property type="evidence" value="ECO:0007669"/>
    <property type="project" value="UniProtKB-SubCell"/>
</dbReference>
<dbReference type="GO" id="GO:0003723">
    <property type="term" value="F:RNA binding"/>
    <property type="evidence" value="ECO:0007669"/>
    <property type="project" value="UniProtKB-UniRule"/>
</dbReference>
<dbReference type="GO" id="GO:0004521">
    <property type="term" value="F:RNA endonuclease activity"/>
    <property type="evidence" value="ECO:0007669"/>
    <property type="project" value="UniProtKB-UniRule"/>
</dbReference>
<dbReference type="GO" id="GO:0006402">
    <property type="term" value="P:mRNA catabolic process"/>
    <property type="evidence" value="ECO:0007669"/>
    <property type="project" value="UniProtKB-UniRule"/>
</dbReference>
<dbReference type="CDD" id="cd00077">
    <property type="entry name" value="HDc"/>
    <property type="match status" value="1"/>
</dbReference>
<dbReference type="CDD" id="cd22431">
    <property type="entry name" value="KH-I_RNaseY"/>
    <property type="match status" value="1"/>
</dbReference>
<dbReference type="FunFam" id="1.10.3210.10:FF:000003">
    <property type="entry name" value="Ribonuclease Y"/>
    <property type="match status" value="1"/>
</dbReference>
<dbReference type="FunFam" id="3.30.1370.10:FF:000006">
    <property type="entry name" value="Ribonuclease Y"/>
    <property type="match status" value="1"/>
</dbReference>
<dbReference type="Gene3D" id="1.10.3210.10">
    <property type="entry name" value="Hypothetical protein af1432"/>
    <property type="match status" value="1"/>
</dbReference>
<dbReference type="Gene3D" id="3.30.1370.10">
    <property type="entry name" value="K Homology domain, type 1"/>
    <property type="match status" value="1"/>
</dbReference>
<dbReference type="HAMAP" id="MF_00335">
    <property type="entry name" value="RNase_Y"/>
    <property type="match status" value="1"/>
</dbReference>
<dbReference type="InterPro" id="IPR003607">
    <property type="entry name" value="HD/PDEase_dom"/>
</dbReference>
<dbReference type="InterPro" id="IPR006674">
    <property type="entry name" value="HD_domain"/>
</dbReference>
<dbReference type="InterPro" id="IPR006675">
    <property type="entry name" value="HDIG_dom"/>
</dbReference>
<dbReference type="InterPro" id="IPR004087">
    <property type="entry name" value="KH_dom"/>
</dbReference>
<dbReference type="InterPro" id="IPR004088">
    <property type="entry name" value="KH_dom_type_1"/>
</dbReference>
<dbReference type="InterPro" id="IPR036612">
    <property type="entry name" value="KH_dom_type_1_sf"/>
</dbReference>
<dbReference type="InterPro" id="IPR017705">
    <property type="entry name" value="Ribonuclease_Y"/>
</dbReference>
<dbReference type="InterPro" id="IPR022711">
    <property type="entry name" value="RNase_Y_N"/>
</dbReference>
<dbReference type="NCBIfam" id="TIGR00277">
    <property type="entry name" value="HDIG"/>
    <property type="match status" value="1"/>
</dbReference>
<dbReference type="NCBIfam" id="TIGR03319">
    <property type="entry name" value="RNase_Y"/>
    <property type="match status" value="1"/>
</dbReference>
<dbReference type="PANTHER" id="PTHR12826">
    <property type="entry name" value="RIBONUCLEASE Y"/>
    <property type="match status" value="1"/>
</dbReference>
<dbReference type="PANTHER" id="PTHR12826:SF15">
    <property type="entry name" value="RIBONUCLEASE Y"/>
    <property type="match status" value="1"/>
</dbReference>
<dbReference type="Pfam" id="PF01966">
    <property type="entry name" value="HD"/>
    <property type="match status" value="1"/>
</dbReference>
<dbReference type="Pfam" id="PF00013">
    <property type="entry name" value="KH_1"/>
    <property type="match status" value="1"/>
</dbReference>
<dbReference type="Pfam" id="PF12072">
    <property type="entry name" value="RNase_Y_N"/>
    <property type="match status" value="1"/>
</dbReference>
<dbReference type="SMART" id="SM00471">
    <property type="entry name" value="HDc"/>
    <property type="match status" value="1"/>
</dbReference>
<dbReference type="SMART" id="SM00322">
    <property type="entry name" value="KH"/>
    <property type="match status" value="1"/>
</dbReference>
<dbReference type="SUPFAM" id="SSF54791">
    <property type="entry name" value="Eukaryotic type KH-domain (KH-domain type I)"/>
    <property type="match status" value="1"/>
</dbReference>
<dbReference type="SUPFAM" id="SSF109604">
    <property type="entry name" value="HD-domain/PDEase-like"/>
    <property type="match status" value="1"/>
</dbReference>
<dbReference type="PROSITE" id="PS51831">
    <property type="entry name" value="HD"/>
    <property type="match status" value="1"/>
</dbReference>
<dbReference type="PROSITE" id="PS50084">
    <property type="entry name" value="KH_TYPE_1"/>
    <property type="match status" value="1"/>
</dbReference>
<evidence type="ECO:0000255" key="1">
    <source>
        <dbReference type="HAMAP-Rule" id="MF_00335"/>
    </source>
</evidence>
<evidence type="ECO:0000255" key="2">
    <source>
        <dbReference type="PROSITE-ProRule" id="PRU01175"/>
    </source>
</evidence>
<organism>
    <name type="scientific">Staphylococcus aureus (strain MRSA252)</name>
    <dbReference type="NCBI Taxonomy" id="282458"/>
    <lineage>
        <taxon>Bacteria</taxon>
        <taxon>Bacillati</taxon>
        <taxon>Bacillota</taxon>
        <taxon>Bacilli</taxon>
        <taxon>Bacillales</taxon>
        <taxon>Staphylococcaceae</taxon>
        <taxon>Staphylococcus</taxon>
    </lineage>
</organism>
<reference key="1">
    <citation type="journal article" date="2004" name="Proc. Natl. Acad. Sci. U.S.A.">
        <title>Complete genomes of two clinical Staphylococcus aureus strains: evidence for the rapid evolution of virulence and drug resistance.</title>
        <authorList>
            <person name="Holden M.T.G."/>
            <person name="Feil E.J."/>
            <person name="Lindsay J.A."/>
            <person name="Peacock S.J."/>
            <person name="Day N.P.J."/>
            <person name="Enright M.C."/>
            <person name="Foster T.J."/>
            <person name="Moore C.E."/>
            <person name="Hurst L."/>
            <person name="Atkin R."/>
            <person name="Barron A."/>
            <person name="Bason N."/>
            <person name="Bentley S.D."/>
            <person name="Chillingworth C."/>
            <person name="Chillingworth T."/>
            <person name="Churcher C."/>
            <person name="Clark L."/>
            <person name="Corton C."/>
            <person name="Cronin A."/>
            <person name="Doggett J."/>
            <person name="Dowd L."/>
            <person name="Feltwell T."/>
            <person name="Hance Z."/>
            <person name="Harris B."/>
            <person name="Hauser H."/>
            <person name="Holroyd S."/>
            <person name="Jagels K."/>
            <person name="James K.D."/>
            <person name="Lennard N."/>
            <person name="Line A."/>
            <person name="Mayes R."/>
            <person name="Moule S."/>
            <person name="Mungall K."/>
            <person name="Ormond D."/>
            <person name="Quail M.A."/>
            <person name="Rabbinowitsch E."/>
            <person name="Rutherford K.M."/>
            <person name="Sanders M."/>
            <person name="Sharp S."/>
            <person name="Simmonds M."/>
            <person name="Stevens K."/>
            <person name="Whitehead S."/>
            <person name="Barrell B.G."/>
            <person name="Spratt B.G."/>
            <person name="Parkhill J."/>
        </authorList>
    </citation>
    <scope>NUCLEOTIDE SEQUENCE [LARGE SCALE GENOMIC DNA]</scope>
    <source>
        <strain>MRSA252</strain>
    </source>
</reference>